<keyword id="KW-0963">Cytoplasm</keyword>
<keyword id="KW-0227">DNA damage</keyword>
<keyword id="KW-0228">DNA excision</keyword>
<keyword id="KW-0234">DNA repair</keyword>
<keyword id="KW-0267">Excision nuclease</keyword>
<keyword id="KW-0742">SOS response</keyword>
<comment type="function">
    <text evidence="1">The UvrABC repair system catalyzes the recognition and processing of DNA lesions. UvrC both incises the 5' and 3' sides of the lesion. The N-terminal half is responsible for the 3' incision and the C-terminal half is responsible for the 5' incision.</text>
</comment>
<comment type="subunit">
    <text evidence="1">Interacts with UvrB in an incision complex.</text>
</comment>
<comment type="subcellular location">
    <subcellularLocation>
        <location evidence="1">Cytoplasm</location>
    </subcellularLocation>
</comment>
<comment type="similarity">
    <text evidence="1">Belongs to the UvrC family.</text>
</comment>
<accession>B5F2U1</accession>
<reference key="1">
    <citation type="journal article" date="2011" name="J. Bacteriol.">
        <title>Comparative genomics of 28 Salmonella enterica isolates: evidence for CRISPR-mediated adaptive sublineage evolution.</title>
        <authorList>
            <person name="Fricke W.F."/>
            <person name="Mammel M.K."/>
            <person name="McDermott P.F."/>
            <person name="Tartera C."/>
            <person name="White D.G."/>
            <person name="Leclerc J.E."/>
            <person name="Ravel J."/>
            <person name="Cebula T.A."/>
        </authorList>
    </citation>
    <scope>NUCLEOTIDE SEQUENCE [LARGE SCALE GENOMIC DNA]</scope>
    <source>
        <strain>SL483</strain>
    </source>
</reference>
<feature type="chain" id="PRO_1000099511" description="UvrABC system protein C">
    <location>
        <begin position="1"/>
        <end position="610"/>
    </location>
</feature>
<feature type="domain" description="GIY-YIG" evidence="1">
    <location>
        <begin position="16"/>
        <end position="94"/>
    </location>
</feature>
<feature type="domain" description="UVR" evidence="1">
    <location>
        <begin position="204"/>
        <end position="239"/>
    </location>
</feature>
<organism>
    <name type="scientific">Salmonella agona (strain SL483)</name>
    <dbReference type="NCBI Taxonomy" id="454166"/>
    <lineage>
        <taxon>Bacteria</taxon>
        <taxon>Pseudomonadati</taxon>
        <taxon>Pseudomonadota</taxon>
        <taxon>Gammaproteobacteria</taxon>
        <taxon>Enterobacterales</taxon>
        <taxon>Enterobacteriaceae</taxon>
        <taxon>Salmonella</taxon>
    </lineage>
</organism>
<sequence>MSEIFDAKAFLKTVTSQPGVYRMYDAGGTVIYVGKAKDLKKRLSSYFRSNLASRKTEALVAQIQHIDVTVTHTETEALLLEHNYIKLYQPRYNVLLRDDKSYPFIFLSGDTHPRLAMHRGAKHAKGEYFGPFPNGYAVRETLALLQKIFPIRQCENSVYRNRSRPCLQYQIGRCLGPCVAGLVSEEEYAQQVEYVRLFLSGKDDQVLTQLIARMEKASQDLAFEEAARIRDQIQAVRRVTERQFVSNAGDDLDVIGVAFDAGMACVHVLFIRQGKVLGSRSYFPKVPGGTELGEVVETFVGQFYLQGSQMRTLPGEILLDFNLSDKTLLADSLSELAGRRIHVQTKPRGDRARYLKLARTNAATALITKLSQQSTITQRLTALAAVLKLPAIKRMECFDISHTMGEQTVASCVVFDANGPLRAEYRRYNIAGITPGDDYAAMNQVLRRRYGKAIEESKIPDVILIDGGKGQLAQAKAVFAELDVPWDKHHPLLLGVAKGADRKAGLETLFFEPEGEGFSLPPDSPALHVIQHIRDESHDHAIGGHRKKRAKVKNTSTLETIEGVGPKRRQMLLKYMGGLQGLRNASVEEIAKVPGISQGLAEKIFWSLKH</sequence>
<name>UVRC_SALA4</name>
<gene>
    <name evidence="1" type="primary">uvrC</name>
    <name type="ordered locus">SeAg_B1174</name>
</gene>
<protein>
    <recommendedName>
        <fullName evidence="1">UvrABC system protein C</fullName>
        <shortName evidence="1">Protein UvrC</shortName>
    </recommendedName>
    <alternativeName>
        <fullName evidence="1">Excinuclease ABC subunit C</fullName>
    </alternativeName>
</protein>
<evidence type="ECO:0000255" key="1">
    <source>
        <dbReference type="HAMAP-Rule" id="MF_00203"/>
    </source>
</evidence>
<dbReference type="EMBL" id="CP001138">
    <property type="protein sequence ID" value="ACH49245.1"/>
    <property type="molecule type" value="Genomic_DNA"/>
</dbReference>
<dbReference type="RefSeq" id="WP_001289467.1">
    <property type="nucleotide sequence ID" value="NC_011149.1"/>
</dbReference>
<dbReference type="SMR" id="B5F2U1"/>
<dbReference type="KEGG" id="sea:SeAg_B1174"/>
<dbReference type="HOGENOM" id="CLU_014841_3_0_6"/>
<dbReference type="Proteomes" id="UP000008819">
    <property type="component" value="Chromosome"/>
</dbReference>
<dbReference type="GO" id="GO:0005737">
    <property type="term" value="C:cytoplasm"/>
    <property type="evidence" value="ECO:0007669"/>
    <property type="project" value="UniProtKB-SubCell"/>
</dbReference>
<dbReference type="GO" id="GO:0009380">
    <property type="term" value="C:excinuclease repair complex"/>
    <property type="evidence" value="ECO:0007669"/>
    <property type="project" value="InterPro"/>
</dbReference>
<dbReference type="GO" id="GO:0003677">
    <property type="term" value="F:DNA binding"/>
    <property type="evidence" value="ECO:0007669"/>
    <property type="project" value="UniProtKB-UniRule"/>
</dbReference>
<dbReference type="GO" id="GO:0009381">
    <property type="term" value="F:excinuclease ABC activity"/>
    <property type="evidence" value="ECO:0007669"/>
    <property type="project" value="UniProtKB-UniRule"/>
</dbReference>
<dbReference type="GO" id="GO:0006289">
    <property type="term" value="P:nucleotide-excision repair"/>
    <property type="evidence" value="ECO:0007669"/>
    <property type="project" value="UniProtKB-UniRule"/>
</dbReference>
<dbReference type="GO" id="GO:0009432">
    <property type="term" value="P:SOS response"/>
    <property type="evidence" value="ECO:0007669"/>
    <property type="project" value="UniProtKB-UniRule"/>
</dbReference>
<dbReference type="CDD" id="cd10434">
    <property type="entry name" value="GIY-YIG_UvrC_Cho"/>
    <property type="match status" value="1"/>
</dbReference>
<dbReference type="FunFam" id="1.10.150.20:FF:000005">
    <property type="entry name" value="UvrABC system protein C"/>
    <property type="match status" value="1"/>
</dbReference>
<dbReference type="FunFam" id="3.30.420.340:FF:000001">
    <property type="entry name" value="UvrABC system protein C"/>
    <property type="match status" value="1"/>
</dbReference>
<dbReference type="FunFam" id="3.40.1440.10:FF:000001">
    <property type="entry name" value="UvrABC system protein C"/>
    <property type="match status" value="1"/>
</dbReference>
<dbReference type="FunFam" id="4.10.860.10:FF:000002">
    <property type="entry name" value="UvrABC system protein C"/>
    <property type="match status" value="1"/>
</dbReference>
<dbReference type="Gene3D" id="1.10.150.20">
    <property type="entry name" value="5' to 3' exonuclease, C-terminal subdomain"/>
    <property type="match status" value="1"/>
</dbReference>
<dbReference type="Gene3D" id="3.40.1440.10">
    <property type="entry name" value="GIY-YIG endonuclease"/>
    <property type="match status" value="1"/>
</dbReference>
<dbReference type="Gene3D" id="4.10.860.10">
    <property type="entry name" value="UVR domain"/>
    <property type="match status" value="1"/>
</dbReference>
<dbReference type="Gene3D" id="3.30.420.340">
    <property type="entry name" value="UvrC, RNAse H endonuclease domain"/>
    <property type="match status" value="1"/>
</dbReference>
<dbReference type="HAMAP" id="MF_00203">
    <property type="entry name" value="UvrC"/>
    <property type="match status" value="1"/>
</dbReference>
<dbReference type="InterPro" id="IPR000305">
    <property type="entry name" value="GIY-YIG_endonuc"/>
</dbReference>
<dbReference type="InterPro" id="IPR035901">
    <property type="entry name" value="GIY-YIG_endonuc_sf"/>
</dbReference>
<dbReference type="InterPro" id="IPR047296">
    <property type="entry name" value="GIY-YIG_UvrC_Cho"/>
</dbReference>
<dbReference type="InterPro" id="IPR003583">
    <property type="entry name" value="Hlx-hairpin-Hlx_DNA-bd_motif"/>
</dbReference>
<dbReference type="InterPro" id="IPR010994">
    <property type="entry name" value="RuvA_2-like"/>
</dbReference>
<dbReference type="InterPro" id="IPR001943">
    <property type="entry name" value="UVR_dom"/>
</dbReference>
<dbReference type="InterPro" id="IPR036876">
    <property type="entry name" value="UVR_dom_sf"/>
</dbReference>
<dbReference type="InterPro" id="IPR050066">
    <property type="entry name" value="UvrABC_protein_C"/>
</dbReference>
<dbReference type="InterPro" id="IPR004791">
    <property type="entry name" value="UvrC"/>
</dbReference>
<dbReference type="InterPro" id="IPR001162">
    <property type="entry name" value="UvrC_RNase_H_dom"/>
</dbReference>
<dbReference type="InterPro" id="IPR038476">
    <property type="entry name" value="UvrC_RNase_H_dom_sf"/>
</dbReference>
<dbReference type="NCBIfam" id="NF001824">
    <property type="entry name" value="PRK00558.1-5"/>
    <property type="match status" value="1"/>
</dbReference>
<dbReference type="NCBIfam" id="TIGR00194">
    <property type="entry name" value="uvrC"/>
    <property type="match status" value="1"/>
</dbReference>
<dbReference type="PANTHER" id="PTHR30562:SF1">
    <property type="entry name" value="UVRABC SYSTEM PROTEIN C"/>
    <property type="match status" value="1"/>
</dbReference>
<dbReference type="PANTHER" id="PTHR30562">
    <property type="entry name" value="UVRC/OXIDOREDUCTASE"/>
    <property type="match status" value="1"/>
</dbReference>
<dbReference type="Pfam" id="PF01541">
    <property type="entry name" value="GIY-YIG"/>
    <property type="match status" value="1"/>
</dbReference>
<dbReference type="Pfam" id="PF14520">
    <property type="entry name" value="HHH_5"/>
    <property type="match status" value="1"/>
</dbReference>
<dbReference type="Pfam" id="PF02151">
    <property type="entry name" value="UVR"/>
    <property type="match status" value="1"/>
</dbReference>
<dbReference type="Pfam" id="PF22920">
    <property type="entry name" value="UvrC_RNaseH"/>
    <property type="match status" value="1"/>
</dbReference>
<dbReference type="Pfam" id="PF08459">
    <property type="entry name" value="UvrC_RNaseH_dom"/>
    <property type="match status" value="1"/>
</dbReference>
<dbReference type="SMART" id="SM00465">
    <property type="entry name" value="GIYc"/>
    <property type="match status" value="1"/>
</dbReference>
<dbReference type="SMART" id="SM00278">
    <property type="entry name" value="HhH1"/>
    <property type="match status" value="2"/>
</dbReference>
<dbReference type="SUPFAM" id="SSF46600">
    <property type="entry name" value="C-terminal UvrC-binding domain of UvrB"/>
    <property type="match status" value="1"/>
</dbReference>
<dbReference type="SUPFAM" id="SSF82771">
    <property type="entry name" value="GIY-YIG endonuclease"/>
    <property type="match status" value="1"/>
</dbReference>
<dbReference type="SUPFAM" id="SSF47781">
    <property type="entry name" value="RuvA domain 2-like"/>
    <property type="match status" value="1"/>
</dbReference>
<dbReference type="PROSITE" id="PS50164">
    <property type="entry name" value="GIY_YIG"/>
    <property type="match status" value="1"/>
</dbReference>
<dbReference type="PROSITE" id="PS50151">
    <property type="entry name" value="UVR"/>
    <property type="match status" value="1"/>
</dbReference>
<dbReference type="PROSITE" id="PS50165">
    <property type="entry name" value="UVRC"/>
    <property type="match status" value="1"/>
</dbReference>
<proteinExistence type="inferred from homology"/>